<comment type="function">
    <text evidence="1">Gas vesicles are hollow, gas filled proteinaceous nanostructures found in some microorganisms. During planktonic growth they allow positioning of the organism at a favorable depth for light or nutrient acquisition. GvpA forms the protein shell.</text>
</comment>
<comment type="subunit">
    <text evidence="1">The gas vesicle shell is 2 nm thick and consists of a single layer of this protein. It forms helical ribs nearly perpendicular to the long axis of the vesicle.</text>
</comment>
<comment type="subcellular location">
    <subcellularLocation>
        <location evidence="1">Gas vesicle shell</location>
    </subcellularLocation>
</comment>
<comment type="similarity">
    <text evidence="1">Belongs to the gas vesicle GvpA family.</text>
</comment>
<proteinExistence type="inferred from homology"/>
<protein>
    <recommendedName>
        <fullName evidence="1">Gas vesicle protein A</fullName>
        <shortName evidence="1">GvpA</shortName>
    </recommendedName>
</protein>
<gene>
    <name evidence="1" type="primary">gvpA</name>
    <name type="ordered locus">Acid345_2404</name>
</gene>
<name>GVPA_KORVE</name>
<accession>Q1INZ5</accession>
<keyword id="KW-0304">Gas vesicle</keyword>
<keyword id="KW-1185">Reference proteome</keyword>
<feature type="chain" id="PRO_1000025104" description="Gas vesicle protein A">
    <location>
        <begin position="1"/>
        <end position="98"/>
    </location>
</feature>
<organism>
    <name type="scientific">Koribacter versatilis (strain Ellin345)</name>
    <dbReference type="NCBI Taxonomy" id="204669"/>
    <lineage>
        <taxon>Bacteria</taxon>
        <taxon>Pseudomonadati</taxon>
        <taxon>Acidobacteriota</taxon>
        <taxon>Terriglobia</taxon>
        <taxon>Terriglobales</taxon>
        <taxon>Candidatus Korobacteraceae</taxon>
        <taxon>Candidatus Korobacter</taxon>
    </lineage>
</organism>
<evidence type="ECO:0000255" key="1">
    <source>
        <dbReference type="HAMAP-Rule" id="MF_00576"/>
    </source>
</evidence>
<dbReference type="EMBL" id="CP000360">
    <property type="protein sequence ID" value="ABF41405.1"/>
    <property type="molecule type" value="Genomic_DNA"/>
</dbReference>
<dbReference type="SMR" id="Q1INZ5"/>
<dbReference type="STRING" id="204669.Acid345_2404"/>
<dbReference type="EnsemblBacteria" id="ABF41405">
    <property type="protein sequence ID" value="ABF41405"/>
    <property type="gene ID" value="Acid345_2404"/>
</dbReference>
<dbReference type="KEGG" id="aba:Acid345_2404"/>
<dbReference type="eggNOG" id="ENOG5032YMQ">
    <property type="taxonomic scope" value="Bacteria"/>
</dbReference>
<dbReference type="HOGENOM" id="CLU_2330080_0_0_0"/>
<dbReference type="OrthoDB" id="284387at2"/>
<dbReference type="Proteomes" id="UP000002432">
    <property type="component" value="Chromosome"/>
</dbReference>
<dbReference type="GO" id="GO:0033172">
    <property type="term" value="C:gas vesicle shell"/>
    <property type="evidence" value="ECO:0007669"/>
    <property type="project" value="UniProtKB-UniRule"/>
</dbReference>
<dbReference type="GO" id="GO:0012506">
    <property type="term" value="C:vesicle membrane"/>
    <property type="evidence" value="ECO:0007669"/>
    <property type="project" value="InterPro"/>
</dbReference>
<dbReference type="GO" id="GO:0005198">
    <property type="term" value="F:structural molecule activity"/>
    <property type="evidence" value="ECO:0007669"/>
    <property type="project" value="InterPro"/>
</dbReference>
<dbReference type="HAMAP" id="MF_00576">
    <property type="entry name" value="Gas_vesicle_A"/>
    <property type="match status" value="1"/>
</dbReference>
<dbReference type="InterPro" id="IPR000638">
    <property type="entry name" value="Gas-vesicle_GvpA-like"/>
</dbReference>
<dbReference type="InterPro" id="IPR047870">
    <property type="entry name" value="Gas_vesicle_GvpA"/>
</dbReference>
<dbReference type="InterPro" id="IPR050530">
    <property type="entry name" value="GvpA"/>
</dbReference>
<dbReference type="InterPro" id="IPR018493">
    <property type="entry name" value="GvpA-like_CS"/>
</dbReference>
<dbReference type="NCBIfam" id="NF006874">
    <property type="entry name" value="PRK09371.1"/>
    <property type="match status" value="1"/>
</dbReference>
<dbReference type="PANTHER" id="PTHR35344:SF4">
    <property type="entry name" value="GAS VESICLE PROTEIN A1"/>
    <property type="match status" value="1"/>
</dbReference>
<dbReference type="PANTHER" id="PTHR35344">
    <property type="entry name" value="GAS VESICLE STRUCTURAL PROTEIN 2-RELATED"/>
    <property type="match status" value="1"/>
</dbReference>
<dbReference type="Pfam" id="PF00741">
    <property type="entry name" value="Gas_vesicle"/>
    <property type="match status" value="1"/>
</dbReference>
<dbReference type="PROSITE" id="PS00234">
    <property type="entry name" value="GAS_VESICLE_A_1"/>
    <property type="match status" value="1"/>
</dbReference>
<dbReference type="PROSITE" id="PS00669">
    <property type="entry name" value="GAS_VESICLE_A_2"/>
    <property type="match status" value="1"/>
</dbReference>
<sequence length="98" mass="10639">MAVERVSGGSSLIDVLDRVLDKGIVIDAWVRISLVGIDLITVEARVVVASIDTYLKYADAVGLTGLVSRPQLTEVVEEPVVVEAPATRRTARPSRRRI</sequence>
<reference key="1">
    <citation type="journal article" date="2009" name="Appl. Environ. Microbiol.">
        <title>Three genomes from the phylum Acidobacteria provide insight into the lifestyles of these microorganisms in soils.</title>
        <authorList>
            <person name="Ward N.L."/>
            <person name="Challacombe J.F."/>
            <person name="Janssen P.H."/>
            <person name="Henrissat B."/>
            <person name="Coutinho P.M."/>
            <person name="Wu M."/>
            <person name="Xie G."/>
            <person name="Haft D.H."/>
            <person name="Sait M."/>
            <person name="Badger J."/>
            <person name="Barabote R.D."/>
            <person name="Bradley B."/>
            <person name="Brettin T.S."/>
            <person name="Brinkac L.M."/>
            <person name="Bruce D."/>
            <person name="Creasy T."/>
            <person name="Daugherty S.C."/>
            <person name="Davidsen T.M."/>
            <person name="DeBoy R.T."/>
            <person name="Detter J.C."/>
            <person name="Dodson R.J."/>
            <person name="Durkin A.S."/>
            <person name="Ganapathy A."/>
            <person name="Gwinn-Giglio M."/>
            <person name="Han C.S."/>
            <person name="Khouri H."/>
            <person name="Kiss H."/>
            <person name="Kothari S.P."/>
            <person name="Madupu R."/>
            <person name="Nelson K.E."/>
            <person name="Nelson W.C."/>
            <person name="Paulsen I."/>
            <person name="Penn K."/>
            <person name="Ren Q."/>
            <person name="Rosovitz M.J."/>
            <person name="Selengut J.D."/>
            <person name="Shrivastava S."/>
            <person name="Sullivan S.A."/>
            <person name="Tapia R."/>
            <person name="Thompson L.S."/>
            <person name="Watkins K.L."/>
            <person name="Yang Q."/>
            <person name="Yu C."/>
            <person name="Zafar N."/>
            <person name="Zhou L."/>
            <person name="Kuske C.R."/>
        </authorList>
    </citation>
    <scope>NUCLEOTIDE SEQUENCE [LARGE SCALE GENOMIC DNA]</scope>
    <source>
        <strain>Ellin345</strain>
    </source>
</reference>